<feature type="chain" id="PRO_1000184483" description="ATP synthase subunit c">
    <location>
        <begin position="1"/>
        <end position="84"/>
    </location>
</feature>
<feature type="transmembrane region" description="Helical" evidence="1">
    <location>
        <begin position="10"/>
        <end position="30"/>
    </location>
</feature>
<feature type="transmembrane region" description="Helical" evidence="1">
    <location>
        <begin position="53"/>
        <end position="73"/>
    </location>
</feature>
<feature type="site" description="Reversibly protonated during proton transport" evidence="1">
    <location>
        <position position="60"/>
    </location>
</feature>
<proteinExistence type="inferred from homology"/>
<organism>
    <name type="scientific">Shewanella sp. (strain W3-18-1)</name>
    <dbReference type="NCBI Taxonomy" id="351745"/>
    <lineage>
        <taxon>Bacteria</taxon>
        <taxon>Pseudomonadati</taxon>
        <taxon>Pseudomonadota</taxon>
        <taxon>Gammaproteobacteria</taxon>
        <taxon>Alteromonadales</taxon>
        <taxon>Shewanellaceae</taxon>
        <taxon>Shewanella</taxon>
    </lineage>
</organism>
<name>ATPL_SHESW</name>
<accession>A1RQB5</accession>
<sequence>METVISFTAIAVAIMIGLAALGTAIGFAILGGKFLEASARQPELAPALQIKMFIVAGLLDAISMIAVGVALFFVFANPFLAQLG</sequence>
<dbReference type="EMBL" id="CP000503">
    <property type="protein sequence ID" value="ABM26860.1"/>
    <property type="molecule type" value="Genomic_DNA"/>
</dbReference>
<dbReference type="RefSeq" id="WP_011791281.1">
    <property type="nucleotide sequence ID" value="NC_008750.1"/>
</dbReference>
<dbReference type="SMR" id="A1RQB5"/>
<dbReference type="GeneID" id="67445466"/>
<dbReference type="KEGG" id="shw:Sputw3181_4058"/>
<dbReference type="HOGENOM" id="CLU_148047_1_0_6"/>
<dbReference type="Proteomes" id="UP000002597">
    <property type="component" value="Chromosome"/>
</dbReference>
<dbReference type="GO" id="GO:0005886">
    <property type="term" value="C:plasma membrane"/>
    <property type="evidence" value="ECO:0007669"/>
    <property type="project" value="UniProtKB-SubCell"/>
</dbReference>
<dbReference type="GO" id="GO:0045259">
    <property type="term" value="C:proton-transporting ATP synthase complex"/>
    <property type="evidence" value="ECO:0007669"/>
    <property type="project" value="UniProtKB-KW"/>
</dbReference>
<dbReference type="GO" id="GO:0033177">
    <property type="term" value="C:proton-transporting two-sector ATPase complex, proton-transporting domain"/>
    <property type="evidence" value="ECO:0007669"/>
    <property type="project" value="InterPro"/>
</dbReference>
<dbReference type="GO" id="GO:0008289">
    <property type="term" value="F:lipid binding"/>
    <property type="evidence" value="ECO:0007669"/>
    <property type="project" value="UniProtKB-KW"/>
</dbReference>
<dbReference type="GO" id="GO:0046933">
    <property type="term" value="F:proton-transporting ATP synthase activity, rotational mechanism"/>
    <property type="evidence" value="ECO:0007669"/>
    <property type="project" value="UniProtKB-UniRule"/>
</dbReference>
<dbReference type="CDD" id="cd18185">
    <property type="entry name" value="ATP-synt_Fo_c_ATPE"/>
    <property type="match status" value="1"/>
</dbReference>
<dbReference type="FunFam" id="1.20.20.10:FF:000002">
    <property type="entry name" value="ATP synthase subunit c"/>
    <property type="match status" value="1"/>
</dbReference>
<dbReference type="Gene3D" id="1.20.20.10">
    <property type="entry name" value="F1F0 ATP synthase subunit C"/>
    <property type="match status" value="1"/>
</dbReference>
<dbReference type="HAMAP" id="MF_01396">
    <property type="entry name" value="ATP_synth_c_bact"/>
    <property type="match status" value="1"/>
</dbReference>
<dbReference type="InterPro" id="IPR005953">
    <property type="entry name" value="ATP_synth_csu_bac/chlpt"/>
</dbReference>
<dbReference type="InterPro" id="IPR000454">
    <property type="entry name" value="ATP_synth_F0_csu"/>
</dbReference>
<dbReference type="InterPro" id="IPR020537">
    <property type="entry name" value="ATP_synth_F0_csu_DDCD_BS"/>
</dbReference>
<dbReference type="InterPro" id="IPR038662">
    <property type="entry name" value="ATP_synth_F0_csu_sf"/>
</dbReference>
<dbReference type="InterPro" id="IPR002379">
    <property type="entry name" value="ATPase_proteolipid_c-like_dom"/>
</dbReference>
<dbReference type="InterPro" id="IPR035921">
    <property type="entry name" value="F/V-ATP_Csub_sf"/>
</dbReference>
<dbReference type="NCBIfam" id="TIGR01260">
    <property type="entry name" value="ATP_synt_c"/>
    <property type="match status" value="1"/>
</dbReference>
<dbReference type="NCBIfam" id="NF005363">
    <property type="entry name" value="PRK06876.1"/>
    <property type="match status" value="1"/>
</dbReference>
<dbReference type="Pfam" id="PF00137">
    <property type="entry name" value="ATP-synt_C"/>
    <property type="match status" value="1"/>
</dbReference>
<dbReference type="PRINTS" id="PR00124">
    <property type="entry name" value="ATPASEC"/>
</dbReference>
<dbReference type="SUPFAM" id="SSF81333">
    <property type="entry name" value="F1F0 ATP synthase subunit C"/>
    <property type="match status" value="1"/>
</dbReference>
<dbReference type="PROSITE" id="PS00605">
    <property type="entry name" value="ATPASE_C"/>
    <property type="match status" value="1"/>
</dbReference>
<comment type="function">
    <text evidence="1">F(1)F(0) ATP synthase produces ATP from ADP in the presence of a proton or sodium gradient. F-type ATPases consist of two structural domains, F(1) containing the extramembraneous catalytic core and F(0) containing the membrane proton channel, linked together by a central stalk and a peripheral stalk. During catalysis, ATP synthesis in the catalytic domain of F(1) is coupled via a rotary mechanism of the central stalk subunits to proton translocation.</text>
</comment>
<comment type="function">
    <text evidence="1">Key component of the F(0) channel; it plays a direct role in translocation across the membrane. A homomeric c-ring of between 10-14 subunits forms the central stalk rotor element with the F(1) delta and epsilon subunits.</text>
</comment>
<comment type="subunit">
    <text evidence="1">F-type ATPases have 2 components, F(1) - the catalytic core - and F(0) - the membrane proton channel. F(1) has five subunits: alpha(3), beta(3), gamma(1), delta(1), epsilon(1). F(0) has three main subunits: a(1), b(2) and c(10-14). The alpha and beta chains form an alternating ring which encloses part of the gamma chain. F(1) is attached to F(0) by a central stalk formed by the gamma and epsilon chains, while a peripheral stalk is formed by the delta and b chains.</text>
</comment>
<comment type="subcellular location">
    <subcellularLocation>
        <location evidence="1">Cell inner membrane</location>
        <topology evidence="1">Multi-pass membrane protein</topology>
    </subcellularLocation>
</comment>
<comment type="similarity">
    <text evidence="1">Belongs to the ATPase C chain family.</text>
</comment>
<reference key="1">
    <citation type="submission" date="2006-12" db="EMBL/GenBank/DDBJ databases">
        <title>Complete sequence of Shewanella sp. W3-18-1.</title>
        <authorList>
            <consortium name="US DOE Joint Genome Institute"/>
            <person name="Copeland A."/>
            <person name="Lucas S."/>
            <person name="Lapidus A."/>
            <person name="Barry K."/>
            <person name="Detter J.C."/>
            <person name="Glavina del Rio T."/>
            <person name="Hammon N."/>
            <person name="Israni S."/>
            <person name="Dalin E."/>
            <person name="Tice H."/>
            <person name="Pitluck S."/>
            <person name="Chain P."/>
            <person name="Malfatti S."/>
            <person name="Shin M."/>
            <person name="Vergez L."/>
            <person name="Schmutz J."/>
            <person name="Larimer F."/>
            <person name="Land M."/>
            <person name="Hauser L."/>
            <person name="Kyrpides N."/>
            <person name="Lykidis A."/>
            <person name="Tiedje J."/>
            <person name="Richardson P."/>
        </authorList>
    </citation>
    <scope>NUCLEOTIDE SEQUENCE [LARGE SCALE GENOMIC DNA]</scope>
    <source>
        <strain>W3-18-1</strain>
    </source>
</reference>
<keyword id="KW-0066">ATP synthesis</keyword>
<keyword id="KW-0997">Cell inner membrane</keyword>
<keyword id="KW-1003">Cell membrane</keyword>
<keyword id="KW-0138">CF(0)</keyword>
<keyword id="KW-0375">Hydrogen ion transport</keyword>
<keyword id="KW-0406">Ion transport</keyword>
<keyword id="KW-0446">Lipid-binding</keyword>
<keyword id="KW-0472">Membrane</keyword>
<keyword id="KW-0812">Transmembrane</keyword>
<keyword id="KW-1133">Transmembrane helix</keyword>
<keyword id="KW-0813">Transport</keyword>
<protein>
    <recommendedName>
        <fullName evidence="1">ATP synthase subunit c</fullName>
    </recommendedName>
    <alternativeName>
        <fullName evidence="1">ATP synthase F(0) sector subunit c</fullName>
    </alternativeName>
    <alternativeName>
        <fullName evidence="1">F-type ATPase subunit c</fullName>
        <shortName evidence="1">F-ATPase subunit c</shortName>
    </alternativeName>
    <alternativeName>
        <fullName evidence="1">Lipid-binding protein</fullName>
    </alternativeName>
</protein>
<evidence type="ECO:0000255" key="1">
    <source>
        <dbReference type="HAMAP-Rule" id="MF_01396"/>
    </source>
</evidence>
<gene>
    <name evidence="1" type="primary">atpE</name>
    <name type="ordered locus">Sputw3181_4058</name>
</gene>